<reference key="1">
    <citation type="journal article" date="2002" name="Proc. Natl. Acad. Sci. U.S.A.">
        <title>Extensive mosaic structure revealed by the complete genome sequence of uropathogenic Escherichia coli.</title>
        <authorList>
            <person name="Welch R.A."/>
            <person name="Burland V."/>
            <person name="Plunkett G. III"/>
            <person name="Redford P."/>
            <person name="Roesch P."/>
            <person name="Rasko D."/>
            <person name="Buckles E.L."/>
            <person name="Liou S.-R."/>
            <person name="Boutin A."/>
            <person name="Hackett J."/>
            <person name="Stroud D."/>
            <person name="Mayhew G.F."/>
            <person name="Rose D.J."/>
            <person name="Zhou S."/>
            <person name="Schwartz D.C."/>
            <person name="Perna N.T."/>
            <person name="Mobley H.L.T."/>
            <person name="Donnenberg M.S."/>
            <person name="Blattner F.R."/>
        </authorList>
    </citation>
    <scope>NUCLEOTIDE SEQUENCE [LARGE SCALE GENOMIC DNA]</scope>
    <source>
        <strain>CFT073 / ATCC 700928 / UPEC</strain>
    </source>
</reference>
<accession>Q8CW16</accession>
<feature type="initiator methionine" description="Removed" evidence="1">
    <location>
        <position position="1"/>
    </location>
</feature>
<feature type="chain" id="PRO_0000211651" description="Tat proofreading chaperone DmsD">
    <location>
        <begin position="2"/>
        <end position="204"/>
    </location>
</feature>
<dbReference type="EMBL" id="AE014075">
    <property type="protein sequence ID" value="AAN80442.1"/>
    <property type="status" value="ALT_INIT"/>
    <property type="molecule type" value="Genomic_DNA"/>
</dbReference>
<dbReference type="RefSeq" id="WP_000148699.1">
    <property type="nucleotide sequence ID" value="NZ_CP051263.1"/>
</dbReference>
<dbReference type="BMRB" id="Q8CW16"/>
<dbReference type="SMR" id="Q8CW16"/>
<dbReference type="STRING" id="199310.c1982"/>
<dbReference type="KEGG" id="ecc:c1982"/>
<dbReference type="eggNOG" id="COG3381">
    <property type="taxonomic scope" value="Bacteria"/>
</dbReference>
<dbReference type="HOGENOM" id="CLU_077650_7_1_6"/>
<dbReference type="Proteomes" id="UP000001410">
    <property type="component" value="Chromosome"/>
</dbReference>
<dbReference type="GO" id="GO:0005048">
    <property type="term" value="F:signal sequence binding"/>
    <property type="evidence" value="ECO:0007669"/>
    <property type="project" value="InterPro"/>
</dbReference>
<dbReference type="GO" id="GO:0061077">
    <property type="term" value="P:chaperone-mediated protein folding"/>
    <property type="evidence" value="ECO:0007669"/>
    <property type="project" value="UniProtKB-UniRule"/>
</dbReference>
<dbReference type="FunFam" id="1.10.3480.10:FF:000002">
    <property type="entry name" value="Tat proofreading chaperone DmsD"/>
    <property type="match status" value="1"/>
</dbReference>
<dbReference type="Gene3D" id="1.10.3480.10">
    <property type="entry name" value="TorD-like"/>
    <property type="match status" value="1"/>
</dbReference>
<dbReference type="HAMAP" id="MF_00940">
    <property type="entry name" value="DmsD_chaperone"/>
    <property type="match status" value="1"/>
</dbReference>
<dbReference type="InterPro" id="IPR026269">
    <property type="entry name" value="DmsD-type"/>
</dbReference>
<dbReference type="InterPro" id="IPR028611">
    <property type="entry name" value="DmsD_chaperone"/>
</dbReference>
<dbReference type="InterPro" id="IPR020945">
    <property type="entry name" value="DMSO/NO3_reduct_chaperone"/>
</dbReference>
<dbReference type="InterPro" id="IPR036411">
    <property type="entry name" value="TorD-like_sf"/>
</dbReference>
<dbReference type="InterPro" id="IPR050289">
    <property type="entry name" value="TorD/DmsD_chaperones"/>
</dbReference>
<dbReference type="NCBIfam" id="NF008632">
    <property type="entry name" value="PRK11621.1"/>
    <property type="match status" value="1"/>
</dbReference>
<dbReference type="PANTHER" id="PTHR34227">
    <property type="entry name" value="CHAPERONE PROTEIN YCDY"/>
    <property type="match status" value="1"/>
</dbReference>
<dbReference type="PANTHER" id="PTHR34227:SF6">
    <property type="entry name" value="TAT PROOFREADING CHAPERONE DMSD"/>
    <property type="match status" value="1"/>
</dbReference>
<dbReference type="Pfam" id="PF02613">
    <property type="entry name" value="Nitrate_red_del"/>
    <property type="match status" value="1"/>
</dbReference>
<dbReference type="PIRSF" id="PIRSF004690">
    <property type="entry name" value="DmsD"/>
    <property type="match status" value="1"/>
</dbReference>
<dbReference type="SUPFAM" id="SSF89155">
    <property type="entry name" value="TorD-like"/>
    <property type="match status" value="1"/>
</dbReference>
<organism>
    <name type="scientific">Escherichia coli O6:H1 (strain CFT073 / ATCC 700928 / UPEC)</name>
    <dbReference type="NCBI Taxonomy" id="199310"/>
    <lineage>
        <taxon>Bacteria</taxon>
        <taxon>Pseudomonadati</taxon>
        <taxon>Pseudomonadota</taxon>
        <taxon>Gammaproteobacteria</taxon>
        <taxon>Enterobacterales</taxon>
        <taxon>Enterobacteriaceae</taxon>
        <taxon>Escherichia</taxon>
    </lineage>
</organism>
<comment type="function">
    <text evidence="2">Required for biogenesis/assembly of DMSO reductase, but not for the interaction of the DmsA signal peptide with the Tat system. May be part of a chaperone cascade complex that facilitates a folding-maturation pathway for the substrate protein.</text>
</comment>
<comment type="similarity">
    <text evidence="2">Belongs to the TorD/DmsD family. DmsD subfamily.</text>
</comment>
<comment type="sequence caution" evidence="3">
    <conflict type="erroneous initiation">
        <sequence resource="EMBL-CDS" id="AAN80442"/>
    </conflict>
    <text>Extended N-terminus.</text>
</comment>
<name>DMSD_ECOL6</name>
<protein>
    <recommendedName>
        <fullName evidence="2">Tat proofreading chaperone DmsD</fullName>
    </recommendedName>
    <alternativeName>
        <fullName evidence="2">DMSO reductase maturation protein</fullName>
    </alternativeName>
    <alternativeName>
        <fullName evidence="2">Twin-arginine leader-binding protein DmsD</fullName>
    </alternativeName>
</protein>
<keyword id="KW-0143">Chaperone</keyword>
<keyword id="KW-1185">Reference proteome</keyword>
<gene>
    <name evidence="2" type="primary">dmsD</name>
    <name type="ordered locus">c1982</name>
</gene>
<evidence type="ECO:0000250" key="1"/>
<evidence type="ECO:0000255" key="2">
    <source>
        <dbReference type="HAMAP-Rule" id="MF_00940"/>
    </source>
</evidence>
<evidence type="ECO:0000305" key="3"/>
<proteinExistence type="inferred from homology"/>
<sequence length="204" mass="23398">MTHFSQQDNFSVAARVLGALFYYAPESAEAAPLVAVLTRDGWETQWPLPEASLAPLVTAFQTQSEETHAQAWQRLFVGPWALPSPPWGSVWLDRESVLFGDSTLALRQWMREKGIQFEMKQNEPEDHFGSLLLMAAWLAENGRQTECEELLAWHLFPWSTRFLDVFIEKAEHPFYRALGELARLTLAQWQSQLLIPVAVKPLFR</sequence>